<comment type="function">
    <text evidence="1">Catalyzes the excretion of spermidine.</text>
</comment>
<comment type="subunit">
    <text evidence="1">Forms a complex with MdtI.</text>
</comment>
<comment type="subcellular location">
    <subcellularLocation>
        <location evidence="1">Cell inner membrane</location>
        <topology evidence="1">Multi-pass membrane protein</topology>
    </subcellularLocation>
</comment>
<comment type="similarity">
    <text evidence="1">Belongs to the drug/metabolite transporter (DMT) superfamily. Small multidrug resistance (SMR) (TC 2.A.7.1) family. MdtJ subfamily.</text>
</comment>
<gene>
    <name evidence="1" type="primary">mdtJ</name>
    <name type="ordered locus">EcolC_2030</name>
</gene>
<organism>
    <name type="scientific">Escherichia coli (strain ATCC 8739 / DSM 1576 / NBRC 3972 / NCIMB 8545 / WDCM 00012 / Crooks)</name>
    <dbReference type="NCBI Taxonomy" id="481805"/>
    <lineage>
        <taxon>Bacteria</taxon>
        <taxon>Pseudomonadati</taxon>
        <taxon>Pseudomonadota</taxon>
        <taxon>Gammaproteobacteria</taxon>
        <taxon>Enterobacterales</taxon>
        <taxon>Enterobacteriaceae</taxon>
        <taxon>Escherichia</taxon>
    </lineage>
</organism>
<reference key="1">
    <citation type="submission" date="2008-02" db="EMBL/GenBank/DDBJ databases">
        <title>Complete sequence of Escherichia coli C str. ATCC 8739.</title>
        <authorList>
            <person name="Copeland A."/>
            <person name="Lucas S."/>
            <person name="Lapidus A."/>
            <person name="Glavina del Rio T."/>
            <person name="Dalin E."/>
            <person name="Tice H."/>
            <person name="Bruce D."/>
            <person name="Goodwin L."/>
            <person name="Pitluck S."/>
            <person name="Kiss H."/>
            <person name="Brettin T."/>
            <person name="Detter J.C."/>
            <person name="Han C."/>
            <person name="Kuske C.R."/>
            <person name="Schmutz J."/>
            <person name="Larimer F."/>
            <person name="Land M."/>
            <person name="Hauser L."/>
            <person name="Kyrpides N."/>
            <person name="Mikhailova N."/>
            <person name="Ingram L."/>
            <person name="Richardson P."/>
        </authorList>
    </citation>
    <scope>NUCLEOTIDE SEQUENCE [LARGE SCALE GENOMIC DNA]</scope>
    <source>
        <strain>ATCC 8739 / DSM 1576 / NBRC 3972 / NCIMB 8545 / WDCM 00012 / Crooks</strain>
    </source>
</reference>
<accession>B1IQZ0</accession>
<keyword id="KW-0997">Cell inner membrane</keyword>
<keyword id="KW-1003">Cell membrane</keyword>
<keyword id="KW-0472">Membrane</keyword>
<keyword id="KW-0812">Transmembrane</keyword>
<keyword id="KW-1133">Transmembrane helix</keyword>
<keyword id="KW-0813">Transport</keyword>
<feature type="chain" id="PRO_1000088004" description="Spermidine export protein MdtJ">
    <location>
        <begin position="1"/>
        <end position="121"/>
    </location>
</feature>
<feature type="transmembrane region" description="Helical" evidence="1">
    <location>
        <begin position="1"/>
        <end position="21"/>
    </location>
</feature>
<feature type="transmembrane region" description="Helical" evidence="1">
    <location>
        <begin position="32"/>
        <end position="52"/>
    </location>
</feature>
<feature type="transmembrane region" description="Helical" evidence="1">
    <location>
        <begin position="55"/>
        <end position="75"/>
    </location>
</feature>
<feature type="transmembrane region" description="Helical" evidence="1">
    <location>
        <begin position="82"/>
        <end position="102"/>
    </location>
</feature>
<sequence length="121" mass="13115">MYIYWILLGLAIATEITGTLSMKWASVSEGNGGFILMLVMISLSYIFLSFAVKKIALGVAYALWEGIGILFITLFSVLLFDESLSLMKIAGLTTLVAGIVLIKSGTRKARKPELEVNHGAV</sequence>
<evidence type="ECO:0000255" key="1">
    <source>
        <dbReference type="HAMAP-Rule" id="MF_01598"/>
    </source>
</evidence>
<dbReference type="EMBL" id="CP000946">
    <property type="protein sequence ID" value="ACA77674.1"/>
    <property type="molecule type" value="Genomic_DNA"/>
</dbReference>
<dbReference type="RefSeq" id="WP_000276149.1">
    <property type="nucleotide sequence ID" value="NZ_MTFT01000006.1"/>
</dbReference>
<dbReference type="SMR" id="B1IQZ0"/>
<dbReference type="GeneID" id="93775748"/>
<dbReference type="KEGG" id="ecl:EcolC_2030"/>
<dbReference type="HOGENOM" id="CLU_133067_0_0_6"/>
<dbReference type="GO" id="GO:0005886">
    <property type="term" value="C:plasma membrane"/>
    <property type="evidence" value="ECO:0007669"/>
    <property type="project" value="UniProtKB-SubCell"/>
</dbReference>
<dbReference type="GO" id="GO:0015199">
    <property type="term" value="F:amino-acid betaine transmembrane transporter activity"/>
    <property type="evidence" value="ECO:0007669"/>
    <property type="project" value="TreeGrafter"/>
</dbReference>
<dbReference type="GO" id="GO:0015297">
    <property type="term" value="F:antiporter activity"/>
    <property type="evidence" value="ECO:0007669"/>
    <property type="project" value="TreeGrafter"/>
</dbReference>
<dbReference type="GO" id="GO:0015220">
    <property type="term" value="F:choline transmembrane transporter activity"/>
    <property type="evidence" value="ECO:0007669"/>
    <property type="project" value="TreeGrafter"/>
</dbReference>
<dbReference type="GO" id="GO:0015606">
    <property type="term" value="F:spermidine transmembrane transporter activity"/>
    <property type="evidence" value="ECO:0007669"/>
    <property type="project" value="UniProtKB-UniRule"/>
</dbReference>
<dbReference type="GO" id="GO:0031460">
    <property type="term" value="P:glycine betaine transport"/>
    <property type="evidence" value="ECO:0007669"/>
    <property type="project" value="TreeGrafter"/>
</dbReference>
<dbReference type="FunFam" id="1.10.3730.20:FF:000001">
    <property type="entry name" value="Quaternary ammonium compound resistance transporter SugE"/>
    <property type="match status" value="1"/>
</dbReference>
<dbReference type="Gene3D" id="1.10.3730.20">
    <property type="match status" value="1"/>
</dbReference>
<dbReference type="HAMAP" id="MF_01598">
    <property type="entry name" value="MdtJ"/>
    <property type="match status" value="1"/>
</dbReference>
<dbReference type="InterPro" id="IPR000390">
    <property type="entry name" value="Small_drug/metabolite_transptr"/>
</dbReference>
<dbReference type="InterPro" id="IPR045324">
    <property type="entry name" value="Small_multidrug_res"/>
</dbReference>
<dbReference type="InterPro" id="IPR023740">
    <property type="entry name" value="Spermidine_export_MdtJ"/>
</dbReference>
<dbReference type="NCBIfam" id="NF007767">
    <property type="entry name" value="PRK10452.1"/>
    <property type="match status" value="1"/>
</dbReference>
<dbReference type="PANTHER" id="PTHR30561">
    <property type="entry name" value="SMR FAMILY PROTON-DEPENDENT DRUG EFFLUX TRANSPORTER SUGE"/>
    <property type="match status" value="1"/>
</dbReference>
<dbReference type="PANTHER" id="PTHR30561:SF2">
    <property type="entry name" value="SPERMIDINE EXPORT PROTEIN MDTJ"/>
    <property type="match status" value="1"/>
</dbReference>
<dbReference type="Pfam" id="PF00893">
    <property type="entry name" value="Multi_Drug_Res"/>
    <property type="match status" value="1"/>
</dbReference>
<dbReference type="SUPFAM" id="SSF103481">
    <property type="entry name" value="Multidrug resistance efflux transporter EmrE"/>
    <property type="match status" value="1"/>
</dbReference>
<proteinExistence type="inferred from homology"/>
<protein>
    <recommendedName>
        <fullName evidence="1">Spermidine export protein MdtJ</fullName>
    </recommendedName>
</protein>
<name>MDTJ_ECOLC</name>